<evidence type="ECO:0000255" key="1">
    <source>
        <dbReference type="HAMAP-Rule" id="MF_00361"/>
    </source>
</evidence>
<gene>
    <name evidence="1" type="primary">nadK</name>
    <name type="ordered locus">Nmul_A2422</name>
</gene>
<proteinExistence type="inferred from homology"/>
<name>NADK_NITMU</name>
<dbReference type="EC" id="2.7.1.23" evidence="1"/>
<dbReference type="EMBL" id="CP000103">
    <property type="protein sequence ID" value="ABB75711.1"/>
    <property type="molecule type" value="Genomic_DNA"/>
</dbReference>
<dbReference type="RefSeq" id="WP_011381712.1">
    <property type="nucleotide sequence ID" value="NC_007614.1"/>
</dbReference>
<dbReference type="SMR" id="Q2Y6B0"/>
<dbReference type="STRING" id="323848.Nmul_A2422"/>
<dbReference type="KEGG" id="nmu:Nmul_A2422"/>
<dbReference type="eggNOG" id="COG0061">
    <property type="taxonomic scope" value="Bacteria"/>
</dbReference>
<dbReference type="HOGENOM" id="CLU_008831_0_1_4"/>
<dbReference type="OrthoDB" id="9774737at2"/>
<dbReference type="Proteomes" id="UP000002718">
    <property type="component" value="Chromosome"/>
</dbReference>
<dbReference type="GO" id="GO:0005737">
    <property type="term" value="C:cytoplasm"/>
    <property type="evidence" value="ECO:0007669"/>
    <property type="project" value="UniProtKB-SubCell"/>
</dbReference>
<dbReference type="GO" id="GO:0005524">
    <property type="term" value="F:ATP binding"/>
    <property type="evidence" value="ECO:0007669"/>
    <property type="project" value="UniProtKB-KW"/>
</dbReference>
<dbReference type="GO" id="GO:0046872">
    <property type="term" value="F:metal ion binding"/>
    <property type="evidence" value="ECO:0007669"/>
    <property type="project" value="UniProtKB-UniRule"/>
</dbReference>
<dbReference type="GO" id="GO:0051287">
    <property type="term" value="F:NAD binding"/>
    <property type="evidence" value="ECO:0007669"/>
    <property type="project" value="UniProtKB-ARBA"/>
</dbReference>
<dbReference type="GO" id="GO:0003951">
    <property type="term" value="F:NAD+ kinase activity"/>
    <property type="evidence" value="ECO:0007669"/>
    <property type="project" value="UniProtKB-UniRule"/>
</dbReference>
<dbReference type="GO" id="GO:0019674">
    <property type="term" value="P:NAD metabolic process"/>
    <property type="evidence" value="ECO:0007669"/>
    <property type="project" value="InterPro"/>
</dbReference>
<dbReference type="GO" id="GO:0006741">
    <property type="term" value="P:NADP biosynthetic process"/>
    <property type="evidence" value="ECO:0007669"/>
    <property type="project" value="UniProtKB-UniRule"/>
</dbReference>
<dbReference type="Gene3D" id="3.40.50.10330">
    <property type="entry name" value="Probable inorganic polyphosphate/atp-NAD kinase, domain 1"/>
    <property type="match status" value="1"/>
</dbReference>
<dbReference type="Gene3D" id="2.60.200.30">
    <property type="entry name" value="Probable inorganic polyphosphate/atp-NAD kinase, domain 2"/>
    <property type="match status" value="1"/>
</dbReference>
<dbReference type="HAMAP" id="MF_00361">
    <property type="entry name" value="NAD_kinase"/>
    <property type="match status" value="1"/>
</dbReference>
<dbReference type="InterPro" id="IPR017438">
    <property type="entry name" value="ATP-NAD_kinase_N"/>
</dbReference>
<dbReference type="InterPro" id="IPR017437">
    <property type="entry name" value="ATP-NAD_kinase_PpnK-typ_C"/>
</dbReference>
<dbReference type="InterPro" id="IPR016064">
    <property type="entry name" value="NAD/diacylglycerol_kinase_sf"/>
</dbReference>
<dbReference type="InterPro" id="IPR002504">
    <property type="entry name" value="NADK"/>
</dbReference>
<dbReference type="NCBIfam" id="NF002306">
    <property type="entry name" value="PRK01231.1"/>
    <property type="match status" value="1"/>
</dbReference>
<dbReference type="NCBIfam" id="NF002561">
    <property type="entry name" value="PRK02155.1"/>
    <property type="match status" value="1"/>
</dbReference>
<dbReference type="PANTHER" id="PTHR20275">
    <property type="entry name" value="NAD KINASE"/>
    <property type="match status" value="1"/>
</dbReference>
<dbReference type="PANTHER" id="PTHR20275:SF0">
    <property type="entry name" value="NAD KINASE"/>
    <property type="match status" value="1"/>
</dbReference>
<dbReference type="Pfam" id="PF01513">
    <property type="entry name" value="NAD_kinase"/>
    <property type="match status" value="1"/>
</dbReference>
<dbReference type="Pfam" id="PF20143">
    <property type="entry name" value="NAD_kinase_C"/>
    <property type="match status" value="1"/>
</dbReference>
<dbReference type="SUPFAM" id="SSF111331">
    <property type="entry name" value="NAD kinase/diacylglycerol kinase-like"/>
    <property type="match status" value="1"/>
</dbReference>
<reference key="1">
    <citation type="submission" date="2005-08" db="EMBL/GenBank/DDBJ databases">
        <title>Complete sequence of chromosome 1 of Nitrosospira multiformis ATCC 25196.</title>
        <authorList>
            <person name="Copeland A."/>
            <person name="Lucas S."/>
            <person name="Lapidus A."/>
            <person name="Barry K."/>
            <person name="Detter J.C."/>
            <person name="Glavina T."/>
            <person name="Hammon N."/>
            <person name="Israni S."/>
            <person name="Pitluck S."/>
            <person name="Chain P."/>
            <person name="Malfatti S."/>
            <person name="Shin M."/>
            <person name="Vergez L."/>
            <person name="Schmutz J."/>
            <person name="Larimer F."/>
            <person name="Land M."/>
            <person name="Hauser L."/>
            <person name="Kyrpides N."/>
            <person name="Lykidis A."/>
            <person name="Richardson P."/>
        </authorList>
    </citation>
    <scope>NUCLEOTIDE SEQUENCE [LARGE SCALE GENOMIC DNA]</scope>
    <source>
        <strain>ATCC 25196 / NCIMB 11849 / C 71</strain>
    </source>
</reference>
<protein>
    <recommendedName>
        <fullName evidence="1">NAD kinase</fullName>
        <ecNumber evidence="1">2.7.1.23</ecNumber>
    </recommendedName>
    <alternativeName>
        <fullName evidence="1">ATP-dependent NAD kinase</fullName>
    </alternativeName>
</protein>
<accession>Q2Y6B0</accession>
<feature type="chain" id="PRO_0000229659" description="NAD kinase">
    <location>
        <begin position="1"/>
        <end position="294"/>
    </location>
</feature>
<feature type="active site" description="Proton acceptor" evidence="1">
    <location>
        <position position="73"/>
    </location>
</feature>
<feature type="binding site" evidence="1">
    <location>
        <begin position="73"/>
        <end position="74"/>
    </location>
    <ligand>
        <name>NAD(+)</name>
        <dbReference type="ChEBI" id="CHEBI:57540"/>
    </ligand>
</feature>
<feature type="binding site" evidence="1">
    <location>
        <begin position="147"/>
        <end position="148"/>
    </location>
    <ligand>
        <name>NAD(+)</name>
        <dbReference type="ChEBI" id="CHEBI:57540"/>
    </ligand>
</feature>
<feature type="binding site" evidence="1">
    <location>
        <position position="175"/>
    </location>
    <ligand>
        <name>NAD(+)</name>
        <dbReference type="ChEBI" id="CHEBI:57540"/>
    </ligand>
</feature>
<feature type="binding site" evidence="1">
    <location>
        <position position="177"/>
    </location>
    <ligand>
        <name>NAD(+)</name>
        <dbReference type="ChEBI" id="CHEBI:57540"/>
    </ligand>
</feature>
<feature type="binding site" evidence="1">
    <location>
        <begin position="188"/>
        <end position="193"/>
    </location>
    <ligand>
        <name>NAD(+)</name>
        <dbReference type="ChEBI" id="CHEBI:57540"/>
    </ligand>
</feature>
<keyword id="KW-0067">ATP-binding</keyword>
<keyword id="KW-0963">Cytoplasm</keyword>
<keyword id="KW-0418">Kinase</keyword>
<keyword id="KW-0520">NAD</keyword>
<keyword id="KW-0521">NADP</keyword>
<keyword id="KW-0547">Nucleotide-binding</keyword>
<keyword id="KW-1185">Reference proteome</keyword>
<keyword id="KW-0808">Transferase</keyword>
<comment type="function">
    <text evidence="1">Involved in the regulation of the intracellular balance of NAD and NADP, and is a key enzyme in the biosynthesis of NADP. Catalyzes specifically the phosphorylation on 2'-hydroxyl of the adenosine moiety of NAD to yield NADP.</text>
</comment>
<comment type="catalytic activity">
    <reaction evidence="1">
        <text>NAD(+) + ATP = ADP + NADP(+) + H(+)</text>
        <dbReference type="Rhea" id="RHEA:18629"/>
        <dbReference type="ChEBI" id="CHEBI:15378"/>
        <dbReference type="ChEBI" id="CHEBI:30616"/>
        <dbReference type="ChEBI" id="CHEBI:57540"/>
        <dbReference type="ChEBI" id="CHEBI:58349"/>
        <dbReference type="ChEBI" id="CHEBI:456216"/>
        <dbReference type="EC" id="2.7.1.23"/>
    </reaction>
</comment>
<comment type="cofactor">
    <cofactor evidence="1">
        <name>a divalent metal cation</name>
        <dbReference type="ChEBI" id="CHEBI:60240"/>
    </cofactor>
</comment>
<comment type="subcellular location">
    <subcellularLocation>
        <location evidence="1">Cytoplasm</location>
    </subcellularLocation>
</comment>
<comment type="similarity">
    <text evidence="1">Belongs to the NAD kinase family.</text>
</comment>
<organism>
    <name type="scientific">Nitrosospira multiformis (strain ATCC 25196 / NCIMB 11849 / C 71)</name>
    <dbReference type="NCBI Taxonomy" id="323848"/>
    <lineage>
        <taxon>Bacteria</taxon>
        <taxon>Pseudomonadati</taxon>
        <taxon>Pseudomonadota</taxon>
        <taxon>Betaproteobacteria</taxon>
        <taxon>Nitrosomonadales</taxon>
        <taxon>Nitrosomonadaceae</taxon>
        <taxon>Nitrosospira</taxon>
    </lineage>
</organism>
<sequence>MSSSFQTIALIGKHKNPGIVTPLSSLARYLQSRNLTVLLDNLTAASMDEDSYPAVAMEEIGSRADLAIVLGGDGTMLNIARKLAPFNVPLVGINQGRLGFLTDLSIVTMQQTLGAILEGRYITEQRMLLYAEVARSNVTTFGGLALNDVAVNRGIGGNMIEFEVRINDEYVCLLRSDGLIVATPTGSTAYALSAGGPILHPSLDLVALVPVSPHTLSNRPIVVGPDAAVEILMQRTAVARVHFDSHSHFDLEENDKVMVRRSPHRVTLLHPSDHSYYRMLREKLGWSGLPRNPT</sequence>